<comment type="function">
    <text evidence="1">Poorly processive, error-prone DNA polymerase involved in untargeted mutagenesis. Copies undamaged DNA at stalled replication forks, which arise in vivo from mismatched or misaligned primer ends. These misaligned primers can be extended by PolIV. Exhibits no 3'-5' exonuclease (proofreading) activity. May be involved in translesional synthesis, in conjunction with the beta clamp from PolIII.</text>
</comment>
<comment type="catalytic activity">
    <reaction evidence="1">
        <text>DNA(n) + a 2'-deoxyribonucleoside 5'-triphosphate = DNA(n+1) + diphosphate</text>
        <dbReference type="Rhea" id="RHEA:22508"/>
        <dbReference type="Rhea" id="RHEA-COMP:17339"/>
        <dbReference type="Rhea" id="RHEA-COMP:17340"/>
        <dbReference type="ChEBI" id="CHEBI:33019"/>
        <dbReference type="ChEBI" id="CHEBI:61560"/>
        <dbReference type="ChEBI" id="CHEBI:173112"/>
        <dbReference type="EC" id="2.7.7.7"/>
    </reaction>
</comment>
<comment type="cofactor">
    <cofactor evidence="1">
        <name>Mg(2+)</name>
        <dbReference type="ChEBI" id="CHEBI:18420"/>
    </cofactor>
    <text evidence="1">Binds 2 magnesium ions per subunit.</text>
</comment>
<comment type="subunit">
    <text evidence="1">Monomer.</text>
</comment>
<comment type="subcellular location">
    <subcellularLocation>
        <location evidence="1">Cytoplasm</location>
    </subcellularLocation>
</comment>
<comment type="similarity">
    <text evidence="1">Belongs to the DNA polymerase type-Y family.</text>
</comment>
<name>DPO4_MOOTA</name>
<dbReference type="EC" id="2.7.7.7" evidence="1"/>
<dbReference type="EMBL" id="CP000232">
    <property type="protein sequence ID" value="ABC19543.1"/>
    <property type="molecule type" value="Genomic_DNA"/>
</dbReference>
<dbReference type="RefSeq" id="YP_430086.1">
    <property type="nucleotide sequence ID" value="NC_007644.1"/>
</dbReference>
<dbReference type="SMR" id="Q2RJ46"/>
<dbReference type="STRING" id="264732.Moth_1229"/>
<dbReference type="EnsemblBacteria" id="ABC19543">
    <property type="protein sequence ID" value="ABC19543"/>
    <property type="gene ID" value="Moth_1229"/>
</dbReference>
<dbReference type="KEGG" id="mta:Moth_1229"/>
<dbReference type="PATRIC" id="fig|264732.11.peg.1319"/>
<dbReference type="eggNOG" id="COG0389">
    <property type="taxonomic scope" value="Bacteria"/>
</dbReference>
<dbReference type="HOGENOM" id="CLU_012348_1_1_9"/>
<dbReference type="OrthoDB" id="9808813at2"/>
<dbReference type="GO" id="GO:0005829">
    <property type="term" value="C:cytosol"/>
    <property type="evidence" value="ECO:0007669"/>
    <property type="project" value="TreeGrafter"/>
</dbReference>
<dbReference type="GO" id="GO:0003684">
    <property type="term" value="F:damaged DNA binding"/>
    <property type="evidence" value="ECO:0007669"/>
    <property type="project" value="InterPro"/>
</dbReference>
<dbReference type="GO" id="GO:0003887">
    <property type="term" value="F:DNA-directed DNA polymerase activity"/>
    <property type="evidence" value="ECO:0007669"/>
    <property type="project" value="UniProtKB-UniRule"/>
</dbReference>
<dbReference type="GO" id="GO:0000287">
    <property type="term" value="F:magnesium ion binding"/>
    <property type="evidence" value="ECO:0007669"/>
    <property type="project" value="UniProtKB-UniRule"/>
</dbReference>
<dbReference type="GO" id="GO:0006261">
    <property type="term" value="P:DNA-templated DNA replication"/>
    <property type="evidence" value="ECO:0007669"/>
    <property type="project" value="UniProtKB-UniRule"/>
</dbReference>
<dbReference type="GO" id="GO:0042276">
    <property type="term" value="P:error-prone translesion synthesis"/>
    <property type="evidence" value="ECO:0007669"/>
    <property type="project" value="TreeGrafter"/>
</dbReference>
<dbReference type="GO" id="GO:0009432">
    <property type="term" value="P:SOS response"/>
    <property type="evidence" value="ECO:0007669"/>
    <property type="project" value="TreeGrafter"/>
</dbReference>
<dbReference type="CDD" id="cd03586">
    <property type="entry name" value="PolY_Pol_IV_kappa"/>
    <property type="match status" value="1"/>
</dbReference>
<dbReference type="Gene3D" id="3.30.70.270">
    <property type="match status" value="1"/>
</dbReference>
<dbReference type="Gene3D" id="3.40.1170.60">
    <property type="match status" value="1"/>
</dbReference>
<dbReference type="Gene3D" id="1.10.150.20">
    <property type="entry name" value="5' to 3' exonuclease, C-terminal subdomain"/>
    <property type="match status" value="1"/>
</dbReference>
<dbReference type="Gene3D" id="3.30.1490.100">
    <property type="entry name" value="DNA polymerase, Y-family, little finger domain"/>
    <property type="match status" value="1"/>
</dbReference>
<dbReference type="HAMAP" id="MF_01113">
    <property type="entry name" value="DNApol_IV"/>
    <property type="match status" value="1"/>
</dbReference>
<dbReference type="InterPro" id="IPR043502">
    <property type="entry name" value="DNA/RNA_pol_sf"/>
</dbReference>
<dbReference type="InterPro" id="IPR036775">
    <property type="entry name" value="DNA_pol_Y-fam_lit_finger_sf"/>
</dbReference>
<dbReference type="InterPro" id="IPR017961">
    <property type="entry name" value="DNA_pol_Y-fam_little_finger"/>
</dbReference>
<dbReference type="InterPro" id="IPR050116">
    <property type="entry name" value="DNA_polymerase-Y"/>
</dbReference>
<dbReference type="InterPro" id="IPR022880">
    <property type="entry name" value="DNApol_IV"/>
</dbReference>
<dbReference type="InterPro" id="IPR053848">
    <property type="entry name" value="IMS_HHH_1"/>
</dbReference>
<dbReference type="InterPro" id="IPR043128">
    <property type="entry name" value="Rev_trsase/Diguanyl_cyclase"/>
</dbReference>
<dbReference type="InterPro" id="IPR001126">
    <property type="entry name" value="UmuC"/>
</dbReference>
<dbReference type="NCBIfam" id="NF002677">
    <property type="entry name" value="PRK02406.1"/>
    <property type="match status" value="1"/>
</dbReference>
<dbReference type="NCBIfam" id="NF002848">
    <property type="entry name" value="PRK03103.1"/>
    <property type="match status" value="1"/>
</dbReference>
<dbReference type="PANTHER" id="PTHR11076:SF33">
    <property type="entry name" value="DNA POLYMERASE KAPPA"/>
    <property type="match status" value="1"/>
</dbReference>
<dbReference type="PANTHER" id="PTHR11076">
    <property type="entry name" value="DNA REPAIR POLYMERASE UMUC / TRANSFERASE FAMILY MEMBER"/>
    <property type="match status" value="1"/>
</dbReference>
<dbReference type="Pfam" id="PF00817">
    <property type="entry name" value="IMS"/>
    <property type="match status" value="1"/>
</dbReference>
<dbReference type="Pfam" id="PF11799">
    <property type="entry name" value="IMS_C"/>
    <property type="match status" value="1"/>
</dbReference>
<dbReference type="Pfam" id="PF21999">
    <property type="entry name" value="IMS_HHH_1"/>
    <property type="match status" value="1"/>
</dbReference>
<dbReference type="SUPFAM" id="SSF56672">
    <property type="entry name" value="DNA/RNA polymerases"/>
    <property type="match status" value="1"/>
</dbReference>
<dbReference type="SUPFAM" id="SSF100879">
    <property type="entry name" value="Lesion bypass DNA polymerase (Y-family), little finger domain"/>
    <property type="match status" value="1"/>
</dbReference>
<dbReference type="PROSITE" id="PS50173">
    <property type="entry name" value="UMUC"/>
    <property type="match status" value="1"/>
</dbReference>
<sequence>MVSSDCSILLCDANSFFASVHQALDPGLRGRPVIVAGREATRHGIVLAASYEAKLGYGIKTGMTVREARGLCPHGVFIPPRHDLYIEFSTRILRIMRDFTPLVEPFSIDEAWLDVRGCRDLHGSPLTVARRLKQRIREEVGITTSVGLGPSKLLAKMAAEMQKPDGLTVLDYADVPGKMWPLPVRELFGIGPRMEAHLAKLGIHTIGELAGFPVEVLIKRFGVVGRILHQCARGIDYSPVDPHSLDTVKSIGHQITLPRDYRGYEEIEVVLLELAELVARRVRLGGYLGRTVAISLKDPEFHWLGRSRTLPHYTDTAGDIYAAARHLLHRHWPEWRAVRLVGVSLAGLVPATVRQEDLFGRVERQARLDRACDQLKNRYGERVIHRAVSLTGAGVLYGGS</sequence>
<feature type="chain" id="PRO_1000137143" description="DNA polymerase IV">
    <location>
        <begin position="1"/>
        <end position="400"/>
    </location>
</feature>
<feature type="domain" description="UmuC" evidence="1">
    <location>
        <begin position="8"/>
        <end position="191"/>
    </location>
</feature>
<feature type="active site" evidence="1">
    <location>
        <position position="110"/>
    </location>
</feature>
<feature type="binding site" evidence="1">
    <location>
        <position position="12"/>
    </location>
    <ligand>
        <name>Mg(2+)</name>
        <dbReference type="ChEBI" id="CHEBI:18420"/>
    </ligand>
</feature>
<feature type="binding site" evidence="1">
    <location>
        <position position="109"/>
    </location>
    <ligand>
        <name>Mg(2+)</name>
        <dbReference type="ChEBI" id="CHEBI:18420"/>
    </ligand>
</feature>
<feature type="site" description="Substrate discrimination" evidence="1">
    <location>
        <position position="17"/>
    </location>
</feature>
<protein>
    <recommendedName>
        <fullName evidence="1">DNA polymerase IV</fullName>
        <shortName evidence="1">Pol IV</shortName>
        <ecNumber evidence="1">2.7.7.7</ecNumber>
    </recommendedName>
</protein>
<organism>
    <name type="scientific">Moorella thermoacetica (strain ATCC 39073 / JCM 9320)</name>
    <dbReference type="NCBI Taxonomy" id="264732"/>
    <lineage>
        <taxon>Bacteria</taxon>
        <taxon>Bacillati</taxon>
        <taxon>Bacillota</taxon>
        <taxon>Clostridia</taxon>
        <taxon>Moorellales</taxon>
        <taxon>Moorellaceae</taxon>
        <taxon>Moorella</taxon>
    </lineage>
</organism>
<proteinExistence type="inferred from homology"/>
<reference key="1">
    <citation type="journal article" date="2008" name="Environ. Microbiol.">
        <title>The complete genome sequence of Moorella thermoacetica (f. Clostridium thermoaceticum).</title>
        <authorList>
            <person name="Pierce E."/>
            <person name="Xie G."/>
            <person name="Barabote R.D."/>
            <person name="Saunders E."/>
            <person name="Han C.S."/>
            <person name="Detter J.C."/>
            <person name="Richardson P."/>
            <person name="Brettin T.S."/>
            <person name="Das A."/>
            <person name="Ljungdahl L.G."/>
            <person name="Ragsdale S.W."/>
        </authorList>
    </citation>
    <scope>NUCLEOTIDE SEQUENCE [LARGE SCALE GENOMIC DNA]</scope>
    <source>
        <strain>ATCC 39073 / JCM 9320</strain>
    </source>
</reference>
<keyword id="KW-0963">Cytoplasm</keyword>
<keyword id="KW-0227">DNA damage</keyword>
<keyword id="KW-0234">DNA repair</keyword>
<keyword id="KW-0235">DNA replication</keyword>
<keyword id="KW-0238">DNA-binding</keyword>
<keyword id="KW-0239">DNA-directed DNA polymerase</keyword>
<keyword id="KW-0460">Magnesium</keyword>
<keyword id="KW-0479">Metal-binding</keyword>
<keyword id="KW-0515">Mutator protein</keyword>
<keyword id="KW-0548">Nucleotidyltransferase</keyword>
<keyword id="KW-0808">Transferase</keyword>
<gene>
    <name evidence="1" type="primary">dinB</name>
    <name type="ordered locus">Moth_1229</name>
</gene>
<accession>Q2RJ46</accession>
<evidence type="ECO:0000255" key="1">
    <source>
        <dbReference type="HAMAP-Rule" id="MF_01113"/>
    </source>
</evidence>